<dbReference type="EC" id="2.3.3.9"/>
<dbReference type="EMBL" id="U63518">
    <property type="protein sequence ID" value="AAB53938.1"/>
    <property type="molecule type" value="Genomic_DNA"/>
</dbReference>
<dbReference type="SMR" id="P77947"/>
<dbReference type="UniPathway" id="UPA00703">
    <property type="reaction ID" value="UER00720"/>
</dbReference>
<dbReference type="GO" id="GO:0005737">
    <property type="term" value="C:cytoplasm"/>
    <property type="evidence" value="ECO:0007669"/>
    <property type="project" value="UniProtKB-SubCell"/>
</dbReference>
<dbReference type="GO" id="GO:0004474">
    <property type="term" value="F:malate synthase activity"/>
    <property type="evidence" value="ECO:0007669"/>
    <property type="project" value="UniProtKB-EC"/>
</dbReference>
<dbReference type="GO" id="GO:0006097">
    <property type="term" value="P:glyoxylate cycle"/>
    <property type="evidence" value="ECO:0007669"/>
    <property type="project" value="UniProtKB-UniPathway"/>
</dbReference>
<dbReference type="GO" id="GO:0006099">
    <property type="term" value="P:tricarboxylic acid cycle"/>
    <property type="evidence" value="ECO:0007669"/>
    <property type="project" value="UniProtKB-KW"/>
</dbReference>
<dbReference type="FunFam" id="1.20.1220.12:FF:000001">
    <property type="entry name" value="Malate synthase"/>
    <property type="match status" value="1"/>
</dbReference>
<dbReference type="FunFam" id="3.20.20.360:FF:000001">
    <property type="entry name" value="Malate synthase"/>
    <property type="match status" value="1"/>
</dbReference>
<dbReference type="Gene3D" id="3.20.20.360">
    <property type="entry name" value="Malate synthase, domain 3"/>
    <property type="match status" value="1"/>
</dbReference>
<dbReference type="Gene3D" id="1.20.1220.12">
    <property type="entry name" value="Malate synthase, domain III"/>
    <property type="match status" value="1"/>
</dbReference>
<dbReference type="InterPro" id="IPR044856">
    <property type="entry name" value="Malate_synth_C_sf"/>
</dbReference>
<dbReference type="InterPro" id="IPR011076">
    <property type="entry name" value="Malate_synth_sf"/>
</dbReference>
<dbReference type="InterPro" id="IPR006252">
    <property type="entry name" value="Malate_synthA"/>
</dbReference>
<dbReference type="InterPro" id="IPR019830">
    <property type="entry name" value="Malate_synthase_CS"/>
</dbReference>
<dbReference type="InterPro" id="IPR001465">
    <property type="entry name" value="Malate_synthase_TIM"/>
</dbReference>
<dbReference type="InterPro" id="IPR048355">
    <property type="entry name" value="MS_C"/>
</dbReference>
<dbReference type="InterPro" id="IPR048356">
    <property type="entry name" value="MS_N"/>
</dbReference>
<dbReference type="InterPro" id="IPR046363">
    <property type="entry name" value="MS_N_TIM-barrel_dom"/>
</dbReference>
<dbReference type="NCBIfam" id="TIGR01344">
    <property type="entry name" value="malate_syn_A"/>
    <property type="match status" value="1"/>
</dbReference>
<dbReference type="PANTHER" id="PTHR42902">
    <property type="entry name" value="MALATE SYNTHASE"/>
    <property type="match status" value="1"/>
</dbReference>
<dbReference type="PANTHER" id="PTHR42902:SF1">
    <property type="entry name" value="MALATE SYNTHASE 1-RELATED"/>
    <property type="match status" value="1"/>
</dbReference>
<dbReference type="Pfam" id="PF20659">
    <property type="entry name" value="MS_C"/>
    <property type="match status" value="1"/>
</dbReference>
<dbReference type="Pfam" id="PF20656">
    <property type="entry name" value="MS_N"/>
    <property type="match status" value="1"/>
</dbReference>
<dbReference type="Pfam" id="PF01274">
    <property type="entry name" value="MS_TIM-barrel"/>
    <property type="match status" value="1"/>
</dbReference>
<dbReference type="PIRSF" id="PIRSF001363">
    <property type="entry name" value="Malate_synth"/>
    <property type="match status" value="1"/>
</dbReference>
<dbReference type="SUPFAM" id="SSF51645">
    <property type="entry name" value="Malate synthase G"/>
    <property type="match status" value="1"/>
</dbReference>
<dbReference type="PROSITE" id="PS00510">
    <property type="entry name" value="MALATE_SYNTHASE"/>
    <property type="match status" value="1"/>
</dbReference>
<sequence>MSAPAPSPLAIVDAEPLPRQEEVLTDAALAFVAELLHRRFTRAVTNSSPRRADAAREIARTSTLDFLPETAAVRADDSWRVAGPAALNDRRVEITGPTDRKMTINALNSGAKVWLADFEEPSAPTWENVVLGQVNLSDAYTRNIDFTDERTGKTYALRPLKSWRPSSWPRGWHLNERHLVDPDGSFGARRVVVDFGLYFFHNAQRLLDLGKGPYFYLPKTESHLEARLWNDVFVFAQDYVGIPQGTVRATVLIETITAAYEMEEILYELRDHASGLNAGRWDYLFSIVKNFPATRPKFVLPDRNVTMTKLTMTAFMRRYTNCSSYCHNARASAAIGGMAAFIPSRDAEVNKVAFEKVRADKDREANDGFDGSWVAHPDLVPIAMESFDRCWHRPNQKDRLREDVHVEAADLIAVDSLEATTYAGSSSTAVQVGIRYIEAWLRGLGRVAIFNLMEDAATAEISRSQIWQWINAGVEFEHGEKATPIWPRKSRRGRKWRPVREELGEEPFAARDWQHAHDLVVQVSLDEDYADFLTLPAYERLRG</sequence>
<protein>
    <recommendedName>
        <fullName>Malate synthase</fullName>
        <ecNumber>2.3.3.9</ecNumber>
    </recommendedName>
</protein>
<keyword id="KW-0963">Cytoplasm</keyword>
<keyword id="KW-0329">Glyoxylate bypass</keyword>
<keyword id="KW-0808">Transferase</keyword>
<keyword id="KW-0816">Tricarboxylic acid cycle</keyword>
<comment type="catalytic activity">
    <reaction>
        <text>glyoxylate + acetyl-CoA + H2O = (S)-malate + CoA + H(+)</text>
        <dbReference type="Rhea" id="RHEA:18181"/>
        <dbReference type="ChEBI" id="CHEBI:15377"/>
        <dbReference type="ChEBI" id="CHEBI:15378"/>
        <dbReference type="ChEBI" id="CHEBI:15589"/>
        <dbReference type="ChEBI" id="CHEBI:36655"/>
        <dbReference type="ChEBI" id="CHEBI:57287"/>
        <dbReference type="ChEBI" id="CHEBI:57288"/>
        <dbReference type="EC" id="2.3.3.9"/>
    </reaction>
</comment>
<comment type="pathway">
    <text>Carbohydrate metabolism; glyoxylate cycle; (S)-malate from isocitrate: step 2/2.</text>
</comment>
<comment type="subunit">
    <text>Homodimer.</text>
</comment>
<comment type="subcellular location">
    <subcellularLocation>
        <location evidence="1">Cytoplasm</location>
    </subcellularLocation>
</comment>
<comment type="similarity">
    <text evidence="2">Belongs to the malate synthase family.</text>
</comment>
<accession>P77947</accession>
<name>MASY_STRAE</name>
<organism>
    <name type="scientific">Streptomyces arenae</name>
    <dbReference type="NCBI Taxonomy" id="29301"/>
    <lineage>
        <taxon>Bacteria</taxon>
        <taxon>Bacillati</taxon>
        <taxon>Actinomycetota</taxon>
        <taxon>Actinomycetes</taxon>
        <taxon>Kitasatosporales</taxon>
        <taxon>Streptomycetaceae</taxon>
        <taxon>Streptomyces</taxon>
    </lineage>
</organism>
<gene>
    <name type="primary">aceB</name>
</gene>
<reference key="1">
    <citation type="journal article" date="1997" name="Gene">
        <title>Gene cloning and sequencing, and enzyme purification of the malate synthase of Streptomyces arenae.</title>
        <authorList>
            <person name="Huettner S."/>
            <person name="Mecke D."/>
            <person name="Froehlich K.-U."/>
        </authorList>
    </citation>
    <scope>NUCLEOTIDE SEQUENCE [GENOMIC DNA]</scope>
    <scope>CHARACTERIZATION</scope>
    <source>
        <strain>Tu469</strain>
    </source>
</reference>
<feature type="chain" id="PRO_0000166877" description="Malate synthase">
    <location>
        <begin position="1"/>
        <end position="543"/>
    </location>
</feature>
<proteinExistence type="evidence at protein level"/>
<evidence type="ECO:0000250" key="1"/>
<evidence type="ECO:0000305" key="2"/>